<organism>
    <name type="scientific">Gallus gallus</name>
    <name type="common">Chicken</name>
    <dbReference type="NCBI Taxonomy" id="9031"/>
    <lineage>
        <taxon>Eukaryota</taxon>
        <taxon>Metazoa</taxon>
        <taxon>Chordata</taxon>
        <taxon>Craniata</taxon>
        <taxon>Vertebrata</taxon>
        <taxon>Euteleostomi</taxon>
        <taxon>Archelosauria</taxon>
        <taxon>Archosauria</taxon>
        <taxon>Dinosauria</taxon>
        <taxon>Saurischia</taxon>
        <taxon>Theropoda</taxon>
        <taxon>Coelurosauria</taxon>
        <taxon>Aves</taxon>
        <taxon>Neognathae</taxon>
        <taxon>Galloanserae</taxon>
        <taxon>Galliformes</taxon>
        <taxon>Phasianidae</taxon>
        <taxon>Phasianinae</taxon>
        <taxon>Gallus</taxon>
    </lineage>
</organism>
<gene>
    <name evidence="2" type="primary">SLC38A2</name>
    <name type="synonym">SNAT2</name>
    <name type="ORF">RCJMB04_2k20</name>
</gene>
<comment type="function">
    <text evidence="3">Symporter that cotransports neutral amino acids and sodium ions from the extracellular to the intracellular side of the cell membrane. The transport is pH-sensitive, Li(+)-intolerant, electrogenic, driven by the Na(+) electrochemical gradient and cotransports of neutral amino acids and sodium ions with a stoichiometry of 1:1.</text>
</comment>
<comment type="catalytic activity">
    <reaction evidence="3">
        <text>L-alanine(in) + Na(+)(in) = L-alanine(out) + Na(+)(out)</text>
        <dbReference type="Rhea" id="RHEA:29283"/>
        <dbReference type="ChEBI" id="CHEBI:29101"/>
        <dbReference type="ChEBI" id="CHEBI:57972"/>
    </reaction>
    <physiologicalReaction direction="right-to-left" evidence="3">
        <dbReference type="Rhea" id="RHEA:29285"/>
    </physiologicalReaction>
</comment>
<comment type="catalytic activity">
    <reaction evidence="3">
        <text>glycine(in) + Na(+)(in) = glycine(out) + Na(+)(out)</text>
        <dbReference type="Rhea" id="RHEA:68228"/>
        <dbReference type="ChEBI" id="CHEBI:29101"/>
        <dbReference type="ChEBI" id="CHEBI:57305"/>
    </reaction>
    <physiologicalReaction direction="right-to-left" evidence="3">
        <dbReference type="Rhea" id="RHEA:68230"/>
    </physiologicalReaction>
</comment>
<comment type="catalytic activity">
    <reaction evidence="3">
        <text>L-serine(in) + Na(+)(in) = L-serine(out) + Na(+)(out)</text>
        <dbReference type="Rhea" id="RHEA:29575"/>
        <dbReference type="ChEBI" id="CHEBI:29101"/>
        <dbReference type="ChEBI" id="CHEBI:33384"/>
    </reaction>
    <physiologicalReaction direction="right-to-left" evidence="3">
        <dbReference type="Rhea" id="RHEA:29577"/>
    </physiologicalReaction>
</comment>
<comment type="catalytic activity">
    <reaction evidence="3">
        <text>L-proline(in) + Na(+)(in) = L-proline(out) + Na(+)(out)</text>
        <dbReference type="Rhea" id="RHEA:28967"/>
        <dbReference type="ChEBI" id="CHEBI:29101"/>
        <dbReference type="ChEBI" id="CHEBI:60039"/>
    </reaction>
    <physiologicalReaction direction="right-to-left" evidence="3">
        <dbReference type="Rhea" id="RHEA:28969"/>
    </physiologicalReaction>
</comment>
<comment type="catalytic activity">
    <reaction evidence="3">
        <text>L-methionine(in) + Na(+)(in) = L-methionine(out) + Na(+)(out)</text>
        <dbReference type="Rhea" id="RHEA:68240"/>
        <dbReference type="ChEBI" id="CHEBI:29101"/>
        <dbReference type="ChEBI" id="CHEBI:57844"/>
    </reaction>
    <physiologicalReaction direction="right-to-left" evidence="3">
        <dbReference type="Rhea" id="RHEA:68242"/>
    </physiologicalReaction>
</comment>
<comment type="catalytic activity">
    <reaction evidence="3">
        <text>L-histidine(in) + Na(+)(in) = L-histidine(out) + Na(+)(out)</text>
        <dbReference type="Rhea" id="RHEA:71583"/>
        <dbReference type="ChEBI" id="CHEBI:29101"/>
        <dbReference type="ChEBI" id="CHEBI:57595"/>
    </reaction>
    <physiologicalReaction direction="right-to-left" evidence="3">
        <dbReference type="Rhea" id="RHEA:71585"/>
    </physiologicalReaction>
</comment>
<comment type="catalytic activity">
    <reaction evidence="3">
        <text>L-asparagine(in) + Na(+)(in) = L-asparagine(out) + Na(+)(out)</text>
        <dbReference type="Rhea" id="RHEA:71383"/>
        <dbReference type="ChEBI" id="CHEBI:29101"/>
        <dbReference type="ChEBI" id="CHEBI:58048"/>
    </reaction>
    <physiologicalReaction direction="right-to-left" evidence="3">
        <dbReference type="Rhea" id="RHEA:71385"/>
    </physiologicalReaction>
</comment>
<comment type="catalytic activity">
    <reaction evidence="3">
        <text>L-glutamine(in) + Na(+)(in) = L-glutamine(out) + Na(+)(out)</text>
        <dbReference type="Rhea" id="RHEA:68236"/>
        <dbReference type="ChEBI" id="CHEBI:29101"/>
        <dbReference type="ChEBI" id="CHEBI:58359"/>
    </reaction>
    <physiologicalReaction direction="right-to-left" evidence="3">
        <dbReference type="Rhea" id="RHEA:68238"/>
    </physiologicalReaction>
</comment>
<comment type="catalytic activity">
    <reaction evidence="3">
        <text>L-threonine(in) + Na(+)(in) = L-threonine(out) + Na(+)(out)</text>
        <dbReference type="Rhea" id="RHEA:69999"/>
        <dbReference type="ChEBI" id="CHEBI:29101"/>
        <dbReference type="ChEBI" id="CHEBI:57926"/>
    </reaction>
    <physiologicalReaction direction="right-to-left" evidence="3">
        <dbReference type="Rhea" id="RHEA:70001"/>
    </physiologicalReaction>
</comment>
<comment type="catalytic activity">
    <reaction evidence="3">
        <text>L-leucine(in) + Na(+)(in) = L-leucine(out) + Na(+)(out)</text>
        <dbReference type="Rhea" id="RHEA:29263"/>
        <dbReference type="ChEBI" id="CHEBI:29101"/>
        <dbReference type="ChEBI" id="CHEBI:57427"/>
    </reaction>
    <physiologicalReaction direction="right-to-left" evidence="3">
        <dbReference type="Rhea" id="RHEA:29265"/>
    </physiologicalReaction>
</comment>
<comment type="catalytic activity">
    <reaction evidence="3">
        <text>L-phenylalanine(in) + Na(+)(in) = L-phenylalanine(out) + Na(+)(out)</text>
        <dbReference type="Rhea" id="RHEA:68244"/>
        <dbReference type="ChEBI" id="CHEBI:29101"/>
        <dbReference type="ChEBI" id="CHEBI:58095"/>
    </reaction>
    <physiologicalReaction direction="right-to-left" evidence="3">
        <dbReference type="Rhea" id="RHEA:68246"/>
    </physiologicalReaction>
</comment>
<comment type="activity regulation">
    <text evidence="3">Inhibited by N-methyl-D-glucamine. Inhibited by choline. Allosteric regulation of sodium ions binding by pH.</text>
</comment>
<comment type="subcellular location">
    <subcellularLocation>
        <location evidence="3">Cell membrane</location>
        <topology evidence="3">Multi-pass membrane protein</topology>
    </subcellularLocation>
</comment>
<comment type="alternative products">
    <event type="alternative splicing"/>
    <isoform>
        <id>Q5F468-1</id>
        <name>1</name>
        <sequence type="displayed"/>
    </isoform>
    <isoform>
        <id>Q5F468-2</id>
        <name>2</name>
        <sequence type="described" ref="VSP_029555"/>
    </isoform>
</comment>
<comment type="domain">
    <text evidence="3">The extracellular C-terminal domain controls the voltage dependence for amino acid transports activity.</text>
</comment>
<comment type="similarity">
    <text evidence="8">Belongs to the amino acid/polyamine transporter 2 family.</text>
</comment>
<comment type="sequence caution" evidence="8">
    <conflict type="frameshift">
        <sequence resource="EMBL-CDS" id="CAH65066"/>
    </conflict>
</comment>
<name>S38A2_CHICK</name>
<sequence>MSSAEMGKFDISPDEDSSSYSSNSNDFSYPYPTKPAAMKSHYADMDPENQNFLLDSNVGKKKYETQYHPGTTSFGMSVFNLSNAIVGSGILGLSYAMANTGIALFVILLLVVSILSLYSVHLLLKTANEGGSLLYEQLGMKAFGMPGKLAASGSITMQNIGAMSSYLFIVKYELPLVIKTFMNIEENAGHWYLNGDYLVLLVSVILILPLSLLKNLGYLGYTSGFSLLCMVFFLIVVIWKMFQIPCPMESDIINATLINATLAPFADENITISDACKPEYFIFNSQTVYAVPILTFSFVCHPAILPIYEELKSRSRKRMMNVSYVSFFAMFLMYLLAALFGYLTFYGRVESELLHTYSAFLGADILLLIVRLAVLMAVTLTVPVVIFPIRSSVTQLLWAGKEFSWWRHCSITVVLLAFTNVLVIFVPTIRDIFGFIGASAAAMLIFILPSAFYIKLVKKEPMKSVQKIGAALFFLSGILVMTGCMTLIILDWIHTDASDGH</sequence>
<feature type="chain" id="PRO_0000311373" description="Sodium-coupled neutral amino acid symporter 2">
    <location>
        <begin position="1"/>
        <end position="501"/>
    </location>
</feature>
<feature type="topological domain" description="Cytoplasmic" evidence="3 4">
    <location>
        <begin position="1"/>
        <end position="77"/>
    </location>
</feature>
<feature type="transmembrane region" description="Helical" evidence="4">
    <location>
        <begin position="78"/>
        <end position="97"/>
    </location>
</feature>
<feature type="topological domain" description="Extracellular" evidence="3 4">
    <location>
        <begin position="98"/>
        <end position="103"/>
    </location>
</feature>
<feature type="transmembrane region" description="Helical" evidence="3 4">
    <location>
        <begin position="104"/>
        <end position="124"/>
    </location>
</feature>
<feature type="topological domain" description="Cytoplasmic" evidence="3 4">
    <location>
        <begin position="125"/>
        <end position="159"/>
    </location>
</feature>
<feature type="transmembrane region" description="Helical" evidence="3 4">
    <location>
        <begin position="160"/>
        <end position="178"/>
    </location>
</feature>
<feature type="topological domain" description="Extracellular" evidence="4">
    <location>
        <begin position="179"/>
        <end position="189"/>
    </location>
</feature>
<feature type="transmembrane region" description="Helical" evidence="3 4">
    <location>
        <begin position="190"/>
        <end position="210"/>
    </location>
</feature>
<feature type="topological domain" description="Cytoplasmic" evidence="3 4">
    <location>
        <begin position="211"/>
        <end position="218"/>
    </location>
</feature>
<feature type="transmembrane region" description="Helical" evidence="3 4">
    <location>
        <begin position="219"/>
        <end position="239"/>
    </location>
</feature>
<feature type="topological domain" description="Extracellular" evidence="3 4">
    <location>
        <begin position="240"/>
        <end position="287"/>
    </location>
</feature>
<feature type="transmembrane region" description="Helical" evidence="3 4">
    <location>
        <begin position="288"/>
        <end position="308"/>
    </location>
</feature>
<feature type="topological domain" description="Cytoplasmic" evidence="3 4">
    <location>
        <begin position="309"/>
        <end position="324"/>
    </location>
</feature>
<feature type="transmembrane region" description="Helical" evidence="4">
    <location>
        <begin position="325"/>
        <end position="345"/>
    </location>
</feature>
<feature type="topological domain" description="Extracellular" evidence="3 4">
    <location>
        <begin position="346"/>
        <end position="366"/>
    </location>
</feature>
<feature type="transmembrane region" description="Helical" evidence="4">
    <location>
        <begin position="367"/>
        <end position="387"/>
    </location>
</feature>
<feature type="topological domain" description="Cytoplasmic" evidence="3 4">
    <location>
        <begin position="388"/>
        <end position="408"/>
    </location>
</feature>
<feature type="transmembrane region" description="Helical" evidence="4">
    <location>
        <begin position="409"/>
        <end position="429"/>
    </location>
</feature>
<feature type="topological domain" description="Extracellular" evidence="3 4">
    <location>
        <begin position="430"/>
        <end position="431"/>
    </location>
</feature>
<feature type="transmembrane region" description="Helical" evidence="3 4">
    <location>
        <begin position="432"/>
        <end position="452"/>
    </location>
</feature>
<feature type="topological domain" description="Cytoplasmic" evidence="4">
    <location>
        <begin position="453"/>
        <end position="467"/>
    </location>
</feature>
<feature type="transmembrane region" description="Helical" evidence="3 4">
    <location>
        <begin position="468"/>
        <end position="490"/>
    </location>
</feature>
<feature type="topological domain" description="Extracellular" evidence="4">
    <location>
        <begin position="491"/>
        <end position="501"/>
    </location>
</feature>
<feature type="region of interest" description="Regulates protein turnover upon amino acid deprivation" evidence="1">
    <location>
        <begin position="1"/>
        <end position="97"/>
    </location>
</feature>
<feature type="region of interest" description="Disordered" evidence="6">
    <location>
        <begin position="1"/>
        <end position="26"/>
    </location>
</feature>
<feature type="binding site" evidence="3">
    <location>
        <position position="83"/>
    </location>
    <ligand>
        <name>Na(+)</name>
        <dbReference type="ChEBI" id="CHEBI:29101"/>
    </ligand>
</feature>
<feature type="binding site" evidence="3">
    <location>
        <position position="381"/>
    </location>
    <ligand>
        <name>Na(+)</name>
        <dbReference type="ChEBI" id="CHEBI:29101"/>
    </ligand>
</feature>
<feature type="glycosylation site" description="N-linked (GlcNAc...) asparagine" evidence="4">
    <location>
        <position position="254"/>
    </location>
</feature>
<feature type="glycosylation site" description="N-linked (GlcNAc...) asparagine" evidence="4">
    <location>
        <position position="259"/>
    </location>
</feature>
<feature type="disulfide bond" evidence="5">
    <location>
        <begin position="246"/>
        <end position="276"/>
    </location>
</feature>
<feature type="splice variant" id="VSP_029555" description="In isoform 2." evidence="7">
    <original>G</original>
    <variation>GKHLHITSGSPLKLEKCSYGLIELYLPVHNFFFCALLTG</variation>
    <location>
        <position position="437"/>
    </location>
</feature>
<accession>Q5F468</accession>
<protein>
    <recommendedName>
        <fullName evidence="2">Sodium-coupled neutral amino acid symporter 2</fullName>
    </recommendedName>
    <alternativeName>
        <fullName>Amino acid transporter A2</fullName>
    </alternativeName>
    <alternativeName>
        <fullName>Solute carrier family 38 member 2</fullName>
    </alternativeName>
    <alternativeName>
        <fullName>System A amino acid transporter 2</fullName>
    </alternativeName>
    <alternativeName>
        <fullName>System A transporter 1</fullName>
    </alternativeName>
    <alternativeName>
        <fullName>System N amino acid transporter 2</fullName>
    </alternativeName>
</protein>
<dbReference type="EMBL" id="AJ397292">
    <property type="status" value="NOT_ANNOTATED_CDS"/>
    <property type="molecule type" value="mRNA"/>
</dbReference>
<dbReference type="EMBL" id="AJ851432">
    <property type="protein sequence ID" value="CAH65066.1"/>
    <property type="status" value="ALT_FRAME"/>
    <property type="molecule type" value="mRNA"/>
</dbReference>
<dbReference type="SMR" id="Q5F468"/>
<dbReference type="FunCoup" id="Q5F468">
    <property type="interactions" value="447"/>
</dbReference>
<dbReference type="STRING" id="9031.ENSGALP00000069490"/>
<dbReference type="GlyCosmos" id="Q5F468">
    <property type="glycosylation" value="2 sites, No reported glycans"/>
</dbReference>
<dbReference type="GlyGen" id="Q5F468">
    <property type="glycosylation" value="2 sites"/>
</dbReference>
<dbReference type="PaxDb" id="9031-ENSGALP00000015772"/>
<dbReference type="VEuPathDB" id="HostDB:geneid_417807"/>
<dbReference type="eggNOG" id="KOG1305">
    <property type="taxonomic scope" value="Eukaryota"/>
</dbReference>
<dbReference type="InParanoid" id="Q5F468"/>
<dbReference type="OrthoDB" id="655540at2759"/>
<dbReference type="PhylomeDB" id="Q5F468"/>
<dbReference type="Proteomes" id="UP000000539">
    <property type="component" value="Unassembled WGS sequence"/>
</dbReference>
<dbReference type="GO" id="GO:0005886">
    <property type="term" value="C:plasma membrane"/>
    <property type="evidence" value="ECO:0000250"/>
    <property type="project" value="UniProtKB"/>
</dbReference>
<dbReference type="GO" id="GO:0015172">
    <property type="term" value="F:acidic amino acid transmembrane transporter activity"/>
    <property type="evidence" value="ECO:0000250"/>
    <property type="project" value="UniProtKB"/>
</dbReference>
<dbReference type="GO" id="GO:0015655">
    <property type="term" value="F:alanine:sodium symporter activity"/>
    <property type="evidence" value="ECO:0000250"/>
    <property type="project" value="UniProtKB"/>
</dbReference>
<dbReference type="GO" id="GO:0015171">
    <property type="term" value="F:amino acid transmembrane transporter activity"/>
    <property type="evidence" value="ECO:0000250"/>
    <property type="project" value="UniProtKB"/>
</dbReference>
<dbReference type="GO" id="GO:0005283">
    <property type="term" value="F:amino acid:sodium symporter activity"/>
    <property type="evidence" value="ECO:0000250"/>
    <property type="project" value="UniProtKB"/>
</dbReference>
<dbReference type="GO" id="GO:0015186">
    <property type="term" value="F:L-glutamine transmembrane transporter activity"/>
    <property type="evidence" value="ECO:0000250"/>
    <property type="project" value="UniProtKB"/>
</dbReference>
<dbReference type="GO" id="GO:0015175">
    <property type="term" value="F:neutral L-amino acid transmembrane transporter activity"/>
    <property type="evidence" value="ECO:0000250"/>
    <property type="project" value="UniProtKB"/>
</dbReference>
<dbReference type="GO" id="GO:0005295">
    <property type="term" value="F:neutral L-amino acid:sodium symporter activity"/>
    <property type="evidence" value="ECO:0000250"/>
    <property type="project" value="UniProtKB"/>
</dbReference>
<dbReference type="GO" id="GO:0005298">
    <property type="term" value="F:proline:sodium symporter activity"/>
    <property type="evidence" value="ECO:0000250"/>
    <property type="project" value="UniProtKB"/>
</dbReference>
<dbReference type="GO" id="GO:0032328">
    <property type="term" value="P:alanine transport"/>
    <property type="evidence" value="ECO:0000250"/>
    <property type="project" value="UniProtKB"/>
</dbReference>
<dbReference type="GO" id="GO:0043090">
    <property type="term" value="P:amino acid import"/>
    <property type="evidence" value="ECO:0000250"/>
    <property type="project" value="UniProtKB"/>
</dbReference>
<dbReference type="GO" id="GO:0003333">
    <property type="term" value="P:amino acid transmembrane transport"/>
    <property type="evidence" value="ECO:0000318"/>
    <property type="project" value="GO_Central"/>
</dbReference>
<dbReference type="GO" id="GO:0006865">
    <property type="term" value="P:amino acid transport"/>
    <property type="evidence" value="ECO:0000250"/>
    <property type="project" value="UniProtKB"/>
</dbReference>
<dbReference type="GO" id="GO:0006868">
    <property type="term" value="P:glutamine transport"/>
    <property type="evidence" value="ECO:0000318"/>
    <property type="project" value="GO_Central"/>
</dbReference>
<dbReference type="GO" id="GO:1903803">
    <property type="term" value="P:L-glutamine import across plasma membrane"/>
    <property type="evidence" value="ECO:0000250"/>
    <property type="project" value="UniProtKB"/>
</dbReference>
<dbReference type="GO" id="GO:1904271">
    <property type="term" value="P:L-proline import across plasma membrane"/>
    <property type="evidence" value="ECO:0000250"/>
    <property type="project" value="UniProtKB"/>
</dbReference>
<dbReference type="GO" id="GO:1903812">
    <property type="term" value="P:L-serine import across plasma membrane"/>
    <property type="evidence" value="ECO:0000250"/>
    <property type="project" value="UniProtKB"/>
</dbReference>
<dbReference type="GO" id="GO:0015804">
    <property type="term" value="P:neutral amino acid transport"/>
    <property type="evidence" value="ECO:0000250"/>
    <property type="project" value="UniProtKB"/>
</dbReference>
<dbReference type="GO" id="GO:0015824">
    <property type="term" value="P:proline transport"/>
    <property type="evidence" value="ECO:0000250"/>
    <property type="project" value="UniProtKB"/>
</dbReference>
<dbReference type="GO" id="GO:1903294">
    <property type="term" value="P:regulation of glutamate secretion, neurotransmission"/>
    <property type="evidence" value="ECO:0000250"/>
    <property type="project" value="UniProtKB"/>
</dbReference>
<dbReference type="InterPro" id="IPR013057">
    <property type="entry name" value="AA_transpt_TM"/>
</dbReference>
<dbReference type="PANTHER" id="PTHR22950">
    <property type="entry name" value="AMINO ACID TRANSPORTER"/>
    <property type="match status" value="1"/>
</dbReference>
<dbReference type="PANTHER" id="PTHR22950:SF207">
    <property type="entry name" value="SODIUM-COUPLED NEUTRAL AMINO ACID SYMPORTER 2"/>
    <property type="match status" value="1"/>
</dbReference>
<dbReference type="Pfam" id="PF01490">
    <property type="entry name" value="Aa_trans"/>
    <property type="match status" value="1"/>
</dbReference>
<evidence type="ECO:0000250" key="1"/>
<evidence type="ECO:0000250" key="2">
    <source>
        <dbReference type="UniProtKB" id="Q96QD8"/>
    </source>
</evidence>
<evidence type="ECO:0000250" key="3">
    <source>
        <dbReference type="UniProtKB" id="Q9JHE5"/>
    </source>
</evidence>
<evidence type="ECO:0000255" key="4"/>
<evidence type="ECO:0000255" key="5">
    <source>
        <dbReference type="PROSITE-ProRule" id="PRU00114"/>
    </source>
</evidence>
<evidence type="ECO:0000256" key="6">
    <source>
        <dbReference type="SAM" id="MobiDB-lite"/>
    </source>
</evidence>
<evidence type="ECO:0000303" key="7">
    <source>
    </source>
</evidence>
<evidence type="ECO:0000305" key="8"/>
<keyword id="KW-0025">Alternative splicing</keyword>
<keyword id="KW-0029">Amino-acid transport</keyword>
<keyword id="KW-1003">Cell membrane</keyword>
<keyword id="KW-1015">Disulfide bond</keyword>
<keyword id="KW-0325">Glycoprotein</keyword>
<keyword id="KW-0406">Ion transport</keyword>
<keyword id="KW-0472">Membrane</keyword>
<keyword id="KW-1185">Reference proteome</keyword>
<keyword id="KW-0915">Sodium</keyword>
<keyword id="KW-0739">Sodium transport</keyword>
<keyword id="KW-0769">Symport</keyword>
<keyword id="KW-0812">Transmembrane</keyword>
<keyword id="KW-1133">Transmembrane helix</keyword>
<keyword id="KW-0813">Transport</keyword>
<reference key="1">
    <citation type="journal article" date="2005" name="Genome Biol.">
        <title>Full-length cDNAs from chicken bursal lymphocytes to facilitate gene function analysis.</title>
        <authorList>
            <person name="Caldwell R.B."/>
            <person name="Kierzek A.M."/>
            <person name="Arakawa H."/>
            <person name="Bezzubov Y."/>
            <person name="Zaim J."/>
            <person name="Fiedler P."/>
            <person name="Kutter S."/>
            <person name="Blagodatski A."/>
            <person name="Kostovska D."/>
            <person name="Koter M."/>
            <person name="Plachy J."/>
            <person name="Carninci P."/>
            <person name="Hayashizaki Y."/>
            <person name="Buerstedde J.-M."/>
        </authorList>
    </citation>
    <scope>NUCLEOTIDE SEQUENCE [LARGE SCALE MRNA] (ISOFORM 2)</scope>
    <scope>NUCLEOTIDE SEQUENCE [LARGE SCALE MRNA] OF 327-477 (ISOFORM 1)</scope>
    <source>
        <strain>CB</strain>
        <tissue>Bursa of Fabricius</tissue>
    </source>
</reference>
<proteinExistence type="evidence at transcript level"/>